<name>Y1298_RICBR</name>
<evidence type="ECO:0000255" key="1"/>
<dbReference type="EMBL" id="CP000087">
    <property type="protein sequence ID" value="ABE05379.1"/>
    <property type="molecule type" value="Genomic_DNA"/>
</dbReference>
<dbReference type="RefSeq" id="WP_011477949.1">
    <property type="nucleotide sequence ID" value="NC_007940.1"/>
</dbReference>
<dbReference type="KEGG" id="rbe:RBE_1298"/>
<dbReference type="eggNOG" id="COG3203">
    <property type="taxonomic scope" value="Bacteria"/>
</dbReference>
<dbReference type="HOGENOM" id="CLU_628327_0_0_5"/>
<dbReference type="OrthoDB" id="6758483at2"/>
<dbReference type="Proteomes" id="UP000001951">
    <property type="component" value="Chromosome"/>
</dbReference>
<dbReference type="GO" id="GO:0016020">
    <property type="term" value="C:membrane"/>
    <property type="evidence" value="ECO:0007669"/>
    <property type="project" value="InterPro"/>
</dbReference>
<dbReference type="GO" id="GO:0015288">
    <property type="term" value="F:porin activity"/>
    <property type="evidence" value="ECO:0007669"/>
    <property type="project" value="InterPro"/>
</dbReference>
<dbReference type="Gene3D" id="2.40.160.10">
    <property type="entry name" value="Porin"/>
    <property type="match status" value="1"/>
</dbReference>
<dbReference type="InterPro" id="IPR033900">
    <property type="entry name" value="Gram_neg_porin_domain"/>
</dbReference>
<dbReference type="InterPro" id="IPR023614">
    <property type="entry name" value="Porin_dom_sf"/>
</dbReference>
<dbReference type="Pfam" id="PF13609">
    <property type="entry name" value="Porin_4"/>
    <property type="match status" value="1"/>
</dbReference>
<dbReference type="SUPFAM" id="SSF56935">
    <property type="entry name" value="Porins"/>
    <property type="match status" value="1"/>
</dbReference>
<feature type="signal peptide" evidence="1">
    <location>
        <begin position="1"/>
        <end position="19"/>
    </location>
</feature>
<feature type="chain" id="PRO_0000260168" description="Uncharacterized protein RBE_1298">
    <location>
        <begin position="20"/>
        <end position="436"/>
    </location>
</feature>
<proteinExistence type="inferred from homology"/>
<protein>
    <recommendedName>
        <fullName>Uncharacterized protein RBE_1298</fullName>
    </recommendedName>
</protein>
<keyword id="KW-0732">Signal</keyword>
<reference key="1">
    <citation type="journal article" date="2006" name="PLoS Genet.">
        <title>Genome sequence of Rickettsia bellii illuminates the role of amoebae in gene exchanges between intracellular pathogens.</title>
        <authorList>
            <person name="Ogata H."/>
            <person name="La Scola B."/>
            <person name="Audic S."/>
            <person name="Renesto P."/>
            <person name="Blanc G."/>
            <person name="Robert C."/>
            <person name="Fournier P.-E."/>
            <person name="Claverie J.-M."/>
            <person name="Raoult D."/>
        </authorList>
    </citation>
    <scope>NUCLEOTIDE SEQUENCE [LARGE SCALE GENOMIC DNA]</scope>
    <source>
        <strain>RML369-C</strain>
    </source>
</reference>
<gene>
    <name type="ordered locus">RBE_1298</name>
</gene>
<organism>
    <name type="scientific">Rickettsia bellii (strain RML369-C)</name>
    <dbReference type="NCBI Taxonomy" id="336407"/>
    <lineage>
        <taxon>Bacteria</taxon>
        <taxon>Pseudomonadati</taxon>
        <taxon>Pseudomonadota</taxon>
        <taxon>Alphaproteobacteria</taxon>
        <taxon>Rickettsiales</taxon>
        <taxon>Rickettsiaceae</taxon>
        <taxon>Rickettsieae</taxon>
        <taxon>Rickettsia</taxon>
        <taxon>belli group</taxon>
    </lineage>
</organism>
<sequence length="436" mass="47614">MKKLLLASIIGLASTTSFASGSTTPVISSSDSEIKLEGFYLFESGFSNQNRLGEFENLSDNRKKTAFYTEAAFAATITKTINDVIGGVKIVLQPTTRSKTSTSYNGSHIFIETSYGKVELGSPYDAGNKLRITGGQVAAGSGGYLRYINVGSKYMQYEKLKPDFDTSPSFYIESFSNNFDEFNVKAEAARKISFYTPKMKGFQAGISYTPDSANTGGNKNINNVVFDDSITGITNVRTGIKRNIVENDEIITINQNVTDSISGGLTYEHALGEDADLKLSVTGEYGKPARLAVRSKVIDKTYTVLDTYKLSNLKAYNLGAVFTYGNFSCGASYGSLGKSLTTPQYHKNGRNTYYYNGAIAYGQGPIKTSLSYFKSSRYKNTVDTITVATEYKIMPGLLPYAEISHFQAKGKPVYYPEAPNKKTKGTVGLIGTKLKF</sequence>
<accession>Q1RGY5</accession>